<comment type="function">
    <text evidence="1">Catalyzes the removal of elemental sulfur and selenium atoms from L-cysteine, L-cystine, L-selenocysteine, and L-selenocystine to produce L-alanine.</text>
</comment>
<comment type="catalytic activity">
    <reaction>
        <text>(sulfur carrier)-H + L-cysteine = (sulfur carrier)-SH + L-alanine</text>
        <dbReference type="Rhea" id="RHEA:43892"/>
        <dbReference type="Rhea" id="RHEA-COMP:14737"/>
        <dbReference type="Rhea" id="RHEA-COMP:14739"/>
        <dbReference type="ChEBI" id="CHEBI:29917"/>
        <dbReference type="ChEBI" id="CHEBI:35235"/>
        <dbReference type="ChEBI" id="CHEBI:57972"/>
        <dbReference type="ChEBI" id="CHEBI:64428"/>
        <dbReference type="EC" id="2.8.1.7"/>
    </reaction>
</comment>
<comment type="cofactor">
    <cofactor evidence="1">
        <name>pyridoxal 5'-phosphate</name>
        <dbReference type="ChEBI" id="CHEBI:597326"/>
    </cofactor>
</comment>
<comment type="similarity">
    <text evidence="2">Belongs to the class-V pyridoxal-phosphate-dependent aminotransferase family. Csd subfamily.</text>
</comment>
<feature type="chain" id="PRO_0000150324" description="Probable cysteine desulfurase">
    <location>
        <begin position="1"/>
        <end position="416"/>
    </location>
</feature>
<feature type="active site" description="Cysteine persulfide intermediate" evidence="1">
    <location>
        <position position="374"/>
    </location>
</feature>
<feature type="modified residue" description="N6-(pyridoxal phosphate)lysine" evidence="1">
    <location>
        <position position="236"/>
    </location>
</feature>
<name>CSD_XYLFT</name>
<accession>Q87DJ2</accession>
<gene>
    <name type="primary">csd</name>
    <name type="ordered locus">PD_0690</name>
</gene>
<organism>
    <name type="scientific">Xylella fastidiosa (strain Temecula1 / ATCC 700964)</name>
    <dbReference type="NCBI Taxonomy" id="183190"/>
    <lineage>
        <taxon>Bacteria</taxon>
        <taxon>Pseudomonadati</taxon>
        <taxon>Pseudomonadota</taxon>
        <taxon>Gammaproteobacteria</taxon>
        <taxon>Lysobacterales</taxon>
        <taxon>Lysobacteraceae</taxon>
        <taxon>Xylella</taxon>
    </lineage>
</organism>
<sequence>MDRINTSAAPPTSPDWERLRADFPLLQRHVHGKPLIYFDNANTAQKPQAVITATDTFYRRHNANISRAVHTLGTEATEAYEATRAALATLLNVPMHELVLCSGTTFAINLIAYSWALPRLRTGDVILVSRMEHHANIVPWQLIAERTGARIQVADILPNGTLDLDALHTLMTPQVKLLAITHVSNVLGTVNPIHDICRQARQRGITTVVDGSQAAPHRHINIPAIGCDFYAITGHKLYGPTGTGALWARREHLHIMPPFLGGGEMIKEVSFDGTLFNTPPHKFEAGTPNIAGFIGLSAAVDYVRRIGIDQIETRETELLAHLTEELQKIDGMRLFGTAPNKAAVVSFMIEGTHAHDLATLLDLEGVAVRSGQHCAHPLLQYYGVTATCRASLAFYNTHEEIERFITALLKVRKLLG</sequence>
<reference key="1">
    <citation type="journal article" date="2003" name="J. Bacteriol.">
        <title>Comparative analyses of the complete genome sequences of Pierce's disease and citrus variegated chlorosis strains of Xylella fastidiosa.</title>
        <authorList>
            <person name="Van Sluys M.A."/>
            <person name="de Oliveira M.C."/>
            <person name="Monteiro-Vitorello C.B."/>
            <person name="Miyaki C.Y."/>
            <person name="Furlan L.R."/>
            <person name="Camargo L.E.A."/>
            <person name="da Silva A.C.R."/>
            <person name="Moon D.H."/>
            <person name="Takita M.A."/>
            <person name="Lemos E.G.M."/>
            <person name="Machado M.A."/>
            <person name="Ferro M.I.T."/>
            <person name="da Silva F.R."/>
            <person name="Goldman M.H.S."/>
            <person name="Goldman G.H."/>
            <person name="Lemos M.V.F."/>
            <person name="El-Dorry H."/>
            <person name="Tsai S.M."/>
            <person name="Carrer H."/>
            <person name="Carraro D.M."/>
            <person name="de Oliveira R.C."/>
            <person name="Nunes L.R."/>
            <person name="Siqueira W.J."/>
            <person name="Coutinho L.L."/>
            <person name="Kimura E.T."/>
            <person name="Ferro E.S."/>
            <person name="Harakava R."/>
            <person name="Kuramae E.E."/>
            <person name="Marino C.L."/>
            <person name="Giglioti E."/>
            <person name="Abreu I.L."/>
            <person name="Alves L.M.C."/>
            <person name="do Amaral A.M."/>
            <person name="Baia G.S."/>
            <person name="Blanco S.R."/>
            <person name="Brito M.S."/>
            <person name="Cannavan F.S."/>
            <person name="Celestino A.V."/>
            <person name="da Cunha A.F."/>
            <person name="Fenille R.C."/>
            <person name="Ferro J.A."/>
            <person name="Formighieri E.F."/>
            <person name="Kishi L.T."/>
            <person name="Leoni S.G."/>
            <person name="Oliveira A.R."/>
            <person name="Rosa V.E. Jr."/>
            <person name="Sassaki F.T."/>
            <person name="Sena J.A.D."/>
            <person name="de Souza A.A."/>
            <person name="Truffi D."/>
            <person name="Tsukumo F."/>
            <person name="Yanai G.M."/>
            <person name="Zaros L.G."/>
            <person name="Civerolo E.L."/>
            <person name="Simpson A.J.G."/>
            <person name="Almeida N.F. Jr."/>
            <person name="Setubal J.C."/>
            <person name="Kitajima J.P."/>
        </authorList>
    </citation>
    <scope>NUCLEOTIDE SEQUENCE [LARGE SCALE GENOMIC DNA]</scope>
    <source>
        <strain>Temecula1 / ATCC 700964</strain>
    </source>
</reference>
<protein>
    <recommendedName>
        <fullName>Probable cysteine desulfurase</fullName>
        <ecNumber>2.8.1.7</ecNumber>
    </recommendedName>
</protein>
<evidence type="ECO:0000250" key="1"/>
<evidence type="ECO:0000305" key="2"/>
<proteinExistence type="inferred from homology"/>
<dbReference type="EC" id="2.8.1.7"/>
<dbReference type="EMBL" id="AE009442">
    <property type="protein sequence ID" value="AAO28561.1"/>
    <property type="molecule type" value="Genomic_DNA"/>
</dbReference>
<dbReference type="RefSeq" id="WP_004089067.1">
    <property type="nucleotide sequence ID" value="NC_004556.1"/>
</dbReference>
<dbReference type="SMR" id="Q87DJ2"/>
<dbReference type="KEGG" id="xft:PD_0690"/>
<dbReference type="HOGENOM" id="CLU_003433_2_5_6"/>
<dbReference type="Proteomes" id="UP000002516">
    <property type="component" value="Chromosome"/>
</dbReference>
<dbReference type="GO" id="GO:0031071">
    <property type="term" value="F:cysteine desulfurase activity"/>
    <property type="evidence" value="ECO:0007669"/>
    <property type="project" value="UniProtKB-EC"/>
</dbReference>
<dbReference type="GO" id="GO:0030170">
    <property type="term" value="F:pyridoxal phosphate binding"/>
    <property type="evidence" value="ECO:0007669"/>
    <property type="project" value="InterPro"/>
</dbReference>
<dbReference type="GO" id="GO:0006534">
    <property type="term" value="P:cysteine metabolic process"/>
    <property type="evidence" value="ECO:0007669"/>
    <property type="project" value="InterPro"/>
</dbReference>
<dbReference type="CDD" id="cd06453">
    <property type="entry name" value="SufS_like"/>
    <property type="match status" value="1"/>
</dbReference>
<dbReference type="Gene3D" id="3.90.1150.10">
    <property type="entry name" value="Aspartate Aminotransferase, domain 1"/>
    <property type="match status" value="1"/>
</dbReference>
<dbReference type="Gene3D" id="3.40.640.10">
    <property type="entry name" value="Type I PLP-dependent aspartate aminotransferase-like (Major domain)"/>
    <property type="match status" value="1"/>
</dbReference>
<dbReference type="InterPro" id="IPR000192">
    <property type="entry name" value="Aminotrans_V_dom"/>
</dbReference>
<dbReference type="InterPro" id="IPR020578">
    <property type="entry name" value="Aminotrans_V_PyrdxlP_BS"/>
</dbReference>
<dbReference type="InterPro" id="IPR010970">
    <property type="entry name" value="Cys_dSase_SufS"/>
</dbReference>
<dbReference type="InterPro" id="IPR016454">
    <property type="entry name" value="Cysteine_dSase"/>
</dbReference>
<dbReference type="InterPro" id="IPR015424">
    <property type="entry name" value="PyrdxlP-dep_Trfase"/>
</dbReference>
<dbReference type="InterPro" id="IPR015421">
    <property type="entry name" value="PyrdxlP-dep_Trfase_major"/>
</dbReference>
<dbReference type="InterPro" id="IPR015422">
    <property type="entry name" value="PyrdxlP-dep_Trfase_small"/>
</dbReference>
<dbReference type="NCBIfam" id="TIGR01979">
    <property type="entry name" value="sufS"/>
    <property type="match status" value="1"/>
</dbReference>
<dbReference type="PANTHER" id="PTHR43586">
    <property type="entry name" value="CYSTEINE DESULFURASE"/>
    <property type="match status" value="1"/>
</dbReference>
<dbReference type="PANTHER" id="PTHR43586:SF8">
    <property type="entry name" value="CYSTEINE DESULFURASE 1, CHLOROPLASTIC"/>
    <property type="match status" value="1"/>
</dbReference>
<dbReference type="Pfam" id="PF00266">
    <property type="entry name" value="Aminotran_5"/>
    <property type="match status" value="1"/>
</dbReference>
<dbReference type="PIRSF" id="PIRSF005572">
    <property type="entry name" value="NifS"/>
    <property type="match status" value="1"/>
</dbReference>
<dbReference type="SUPFAM" id="SSF53383">
    <property type="entry name" value="PLP-dependent transferases"/>
    <property type="match status" value="1"/>
</dbReference>
<dbReference type="PROSITE" id="PS00595">
    <property type="entry name" value="AA_TRANSFER_CLASS_5"/>
    <property type="match status" value="1"/>
</dbReference>
<keyword id="KW-0663">Pyridoxal phosphate</keyword>
<keyword id="KW-1185">Reference proteome</keyword>
<keyword id="KW-0808">Transferase</keyword>